<comment type="function">
    <text evidence="1">Catalyzes the conversion of 3-deoxy-D-arabino-heptulosonate 7-phosphate (DAHP) to dehydroquinate (DHQ).</text>
</comment>
<comment type="catalytic activity">
    <reaction evidence="1">
        <text>7-phospho-2-dehydro-3-deoxy-D-arabino-heptonate = 3-dehydroquinate + phosphate</text>
        <dbReference type="Rhea" id="RHEA:21968"/>
        <dbReference type="ChEBI" id="CHEBI:32364"/>
        <dbReference type="ChEBI" id="CHEBI:43474"/>
        <dbReference type="ChEBI" id="CHEBI:58394"/>
        <dbReference type="EC" id="4.2.3.4"/>
    </reaction>
</comment>
<comment type="cofactor">
    <cofactor evidence="1">
        <name>Co(2+)</name>
        <dbReference type="ChEBI" id="CHEBI:48828"/>
    </cofactor>
    <cofactor evidence="1">
        <name>Zn(2+)</name>
        <dbReference type="ChEBI" id="CHEBI:29105"/>
    </cofactor>
    <text evidence="1">Binds 1 divalent metal cation per subunit. Can use either Co(2+) or Zn(2+).</text>
</comment>
<comment type="cofactor">
    <cofactor evidence="1">
        <name>NAD(+)</name>
        <dbReference type="ChEBI" id="CHEBI:57540"/>
    </cofactor>
</comment>
<comment type="pathway">
    <text evidence="1">Metabolic intermediate biosynthesis; chorismate biosynthesis; chorismate from D-erythrose 4-phosphate and phosphoenolpyruvate: step 2/7.</text>
</comment>
<comment type="subcellular location">
    <subcellularLocation>
        <location evidence="1">Cytoplasm</location>
    </subcellularLocation>
</comment>
<comment type="similarity">
    <text evidence="1">Belongs to the sugar phosphate cyclases superfamily. Dehydroquinate synthase family.</text>
</comment>
<keyword id="KW-0028">Amino-acid biosynthesis</keyword>
<keyword id="KW-0057">Aromatic amino acid biosynthesis</keyword>
<keyword id="KW-0170">Cobalt</keyword>
<keyword id="KW-0963">Cytoplasm</keyword>
<keyword id="KW-0456">Lyase</keyword>
<keyword id="KW-0479">Metal-binding</keyword>
<keyword id="KW-0520">NAD</keyword>
<keyword id="KW-0547">Nucleotide-binding</keyword>
<keyword id="KW-1185">Reference proteome</keyword>
<keyword id="KW-0862">Zinc</keyword>
<reference key="1">
    <citation type="submission" date="2007-02" db="EMBL/GenBank/DDBJ databases">
        <title>Complete sequence of Clostridium thermocellum ATCC 27405.</title>
        <authorList>
            <consortium name="US DOE Joint Genome Institute"/>
            <person name="Copeland A."/>
            <person name="Lucas S."/>
            <person name="Lapidus A."/>
            <person name="Barry K."/>
            <person name="Detter J.C."/>
            <person name="Glavina del Rio T."/>
            <person name="Hammon N."/>
            <person name="Israni S."/>
            <person name="Dalin E."/>
            <person name="Tice H."/>
            <person name="Pitluck S."/>
            <person name="Chertkov O."/>
            <person name="Brettin T."/>
            <person name="Bruce D."/>
            <person name="Han C."/>
            <person name="Tapia R."/>
            <person name="Gilna P."/>
            <person name="Schmutz J."/>
            <person name="Larimer F."/>
            <person name="Land M."/>
            <person name="Hauser L."/>
            <person name="Kyrpides N."/>
            <person name="Mikhailova N."/>
            <person name="Wu J.H.D."/>
            <person name="Newcomb M."/>
            <person name="Richardson P."/>
        </authorList>
    </citation>
    <scope>NUCLEOTIDE SEQUENCE [LARGE SCALE GENOMIC DNA]</scope>
    <source>
        <strain>ATCC 27405 / DSM 1237 / JCM 9322 / NBRC 103400 / NCIMB 10682 / NRRL B-4536 / VPI 7372</strain>
    </source>
</reference>
<dbReference type="EC" id="4.2.3.4" evidence="1"/>
<dbReference type="EMBL" id="CP000568">
    <property type="protein sequence ID" value="ABN52021.1"/>
    <property type="molecule type" value="Genomic_DNA"/>
</dbReference>
<dbReference type="RefSeq" id="WP_004463359.1">
    <property type="nucleotide sequence ID" value="NC_009012.1"/>
</dbReference>
<dbReference type="SMR" id="A3DDJ2"/>
<dbReference type="STRING" id="203119.Cthe_0786"/>
<dbReference type="GeneID" id="35803787"/>
<dbReference type="KEGG" id="cth:Cthe_0786"/>
<dbReference type="eggNOG" id="COG0337">
    <property type="taxonomic scope" value="Bacteria"/>
</dbReference>
<dbReference type="HOGENOM" id="CLU_001201_0_2_9"/>
<dbReference type="OrthoDB" id="9806583at2"/>
<dbReference type="UniPathway" id="UPA00053">
    <property type="reaction ID" value="UER00085"/>
</dbReference>
<dbReference type="Proteomes" id="UP000002145">
    <property type="component" value="Chromosome"/>
</dbReference>
<dbReference type="GO" id="GO:0005737">
    <property type="term" value="C:cytoplasm"/>
    <property type="evidence" value="ECO:0007669"/>
    <property type="project" value="UniProtKB-SubCell"/>
</dbReference>
<dbReference type="GO" id="GO:0003856">
    <property type="term" value="F:3-dehydroquinate synthase activity"/>
    <property type="evidence" value="ECO:0007669"/>
    <property type="project" value="UniProtKB-UniRule"/>
</dbReference>
<dbReference type="GO" id="GO:0046872">
    <property type="term" value="F:metal ion binding"/>
    <property type="evidence" value="ECO:0007669"/>
    <property type="project" value="UniProtKB-KW"/>
</dbReference>
<dbReference type="GO" id="GO:0000166">
    <property type="term" value="F:nucleotide binding"/>
    <property type="evidence" value="ECO:0007669"/>
    <property type="project" value="UniProtKB-KW"/>
</dbReference>
<dbReference type="GO" id="GO:0008652">
    <property type="term" value="P:amino acid biosynthetic process"/>
    <property type="evidence" value="ECO:0007669"/>
    <property type="project" value="UniProtKB-KW"/>
</dbReference>
<dbReference type="GO" id="GO:0009073">
    <property type="term" value="P:aromatic amino acid family biosynthetic process"/>
    <property type="evidence" value="ECO:0007669"/>
    <property type="project" value="UniProtKB-KW"/>
</dbReference>
<dbReference type="GO" id="GO:0009423">
    <property type="term" value="P:chorismate biosynthetic process"/>
    <property type="evidence" value="ECO:0007669"/>
    <property type="project" value="UniProtKB-UniRule"/>
</dbReference>
<dbReference type="CDD" id="cd08195">
    <property type="entry name" value="DHQS"/>
    <property type="match status" value="1"/>
</dbReference>
<dbReference type="FunFam" id="3.40.50.1970:FF:000007">
    <property type="entry name" value="Pentafunctional AROM polypeptide"/>
    <property type="match status" value="1"/>
</dbReference>
<dbReference type="Gene3D" id="3.40.50.1970">
    <property type="match status" value="1"/>
</dbReference>
<dbReference type="Gene3D" id="1.20.1090.10">
    <property type="entry name" value="Dehydroquinate synthase-like - alpha domain"/>
    <property type="match status" value="1"/>
</dbReference>
<dbReference type="HAMAP" id="MF_00110">
    <property type="entry name" value="DHQ_synthase"/>
    <property type="match status" value="1"/>
</dbReference>
<dbReference type="InterPro" id="IPR050071">
    <property type="entry name" value="Dehydroquinate_synthase"/>
</dbReference>
<dbReference type="InterPro" id="IPR016037">
    <property type="entry name" value="DHQ_synth_AroB"/>
</dbReference>
<dbReference type="InterPro" id="IPR030963">
    <property type="entry name" value="DHQ_synth_fam"/>
</dbReference>
<dbReference type="InterPro" id="IPR030960">
    <property type="entry name" value="DHQS/DOIS_N"/>
</dbReference>
<dbReference type="InterPro" id="IPR056179">
    <property type="entry name" value="DHQS_C"/>
</dbReference>
<dbReference type="NCBIfam" id="TIGR01357">
    <property type="entry name" value="aroB"/>
    <property type="match status" value="1"/>
</dbReference>
<dbReference type="PANTHER" id="PTHR43622">
    <property type="entry name" value="3-DEHYDROQUINATE SYNTHASE"/>
    <property type="match status" value="1"/>
</dbReference>
<dbReference type="PANTHER" id="PTHR43622:SF7">
    <property type="entry name" value="3-DEHYDROQUINATE SYNTHASE, CHLOROPLASTIC"/>
    <property type="match status" value="1"/>
</dbReference>
<dbReference type="Pfam" id="PF01761">
    <property type="entry name" value="DHQ_synthase"/>
    <property type="match status" value="1"/>
</dbReference>
<dbReference type="Pfam" id="PF24621">
    <property type="entry name" value="DHQS_C"/>
    <property type="match status" value="1"/>
</dbReference>
<dbReference type="PIRSF" id="PIRSF001455">
    <property type="entry name" value="DHQ_synth"/>
    <property type="match status" value="1"/>
</dbReference>
<dbReference type="SUPFAM" id="SSF56796">
    <property type="entry name" value="Dehydroquinate synthase-like"/>
    <property type="match status" value="1"/>
</dbReference>
<proteinExistence type="inferred from homology"/>
<feature type="chain" id="PRO_1000094494" description="3-dehydroquinate synthase">
    <location>
        <begin position="1"/>
        <end position="360"/>
    </location>
</feature>
<feature type="binding site" evidence="1">
    <location>
        <begin position="105"/>
        <end position="109"/>
    </location>
    <ligand>
        <name>NAD(+)</name>
        <dbReference type="ChEBI" id="CHEBI:57540"/>
    </ligand>
</feature>
<feature type="binding site" evidence="1">
    <location>
        <begin position="129"/>
        <end position="130"/>
    </location>
    <ligand>
        <name>NAD(+)</name>
        <dbReference type="ChEBI" id="CHEBI:57540"/>
    </ligand>
</feature>
<feature type="binding site" evidence="1">
    <location>
        <position position="142"/>
    </location>
    <ligand>
        <name>NAD(+)</name>
        <dbReference type="ChEBI" id="CHEBI:57540"/>
    </ligand>
</feature>
<feature type="binding site" evidence="1">
    <location>
        <position position="151"/>
    </location>
    <ligand>
        <name>NAD(+)</name>
        <dbReference type="ChEBI" id="CHEBI:57540"/>
    </ligand>
</feature>
<feature type="binding site" evidence="1">
    <location>
        <begin position="169"/>
        <end position="172"/>
    </location>
    <ligand>
        <name>NAD(+)</name>
        <dbReference type="ChEBI" id="CHEBI:57540"/>
    </ligand>
</feature>
<feature type="binding site" evidence="1">
    <location>
        <position position="184"/>
    </location>
    <ligand>
        <name>Zn(2+)</name>
        <dbReference type="ChEBI" id="CHEBI:29105"/>
    </ligand>
</feature>
<feature type="binding site" evidence="1">
    <location>
        <position position="247"/>
    </location>
    <ligand>
        <name>Zn(2+)</name>
        <dbReference type="ChEBI" id="CHEBI:29105"/>
    </ligand>
</feature>
<feature type="binding site" evidence="1">
    <location>
        <position position="263"/>
    </location>
    <ligand>
        <name>Zn(2+)</name>
        <dbReference type="ChEBI" id="CHEBI:29105"/>
    </ligand>
</feature>
<accession>A3DDJ2</accession>
<name>AROB_ACET2</name>
<gene>
    <name evidence="1" type="primary">aroB</name>
    <name type="ordered locus">Cthe_0786</name>
</gene>
<protein>
    <recommendedName>
        <fullName evidence="1">3-dehydroquinate synthase</fullName>
        <shortName evidence="1">DHQS</shortName>
        <ecNumber evidence="1">4.2.3.4</ecNumber>
    </recommendedName>
</protein>
<evidence type="ECO:0000255" key="1">
    <source>
        <dbReference type="HAMAP-Rule" id="MF_00110"/>
    </source>
</evidence>
<organism>
    <name type="scientific">Acetivibrio thermocellus (strain ATCC 27405 / DSM 1237 / JCM 9322 / NBRC 103400 / NCIMB 10682 / NRRL B-4536 / VPI 7372)</name>
    <name type="common">Clostridium thermocellum</name>
    <dbReference type="NCBI Taxonomy" id="203119"/>
    <lineage>
        <taxon>Bacteria</taxon>
        <taxon>Bacillati</taxon>
        <taxon>Bacillota</taxon>
        <taxon>Clostridia</taxon>
        <taxon>Eubacteriales</taxon>
        <taxon>Oscillospiraceae</taxon>
        <taxon>Acetivibrio</taxon>
    </lineage>
</organism>
<sequence>MIKLNVNLQDRSYPIYISTDYSQIGKCIQSAKLTGKMVLITDTNVDKYQAEECVKAFSDAGYEVSKFVIPAGEENKNLDTTRDIYKYLLGLKLDRSATLMALGGGVVGDITGFAAATFLRGINFVQIPTTLLAQSDSSVGGKVGVDFEGTKNIIGAFYQPKFVYINVNTLKTLPERELKAGLAEVVKHGVIMDEEFYEYIDYNVHKILNHDEAVLQYIAKRNCSIKASVVEKDEKEGGLRAILNFGHTIGHAIETVMNFELLHGECVSLGMVGAMRMALYLEMIDEQSVNRVKNTLDKIGLPTRLEGIDVDKVYNQMFYDKKIKGSKLTFVLPRKRIGEVIQCTIDDEDLIKRVIASLGE</sequence>